<comment type="function">
    <text evidence="1">This b-type cytochrome is tightly associated with the reaction center of photosystem II (PSII). PSII is a light-driven water:plastoquinone oxidoreductase that uses light energy to abstract electrons from H(2)O, generating O(2) and a proton gradient subsequently used for ATP formation. It consists of a core antenna complex that captures photons, and an electron transfer chain that converts photonic excitation into a charge separation.</text>
</comment>
<comment type="cofactor">
    <cofactor evidence="1">
        <name>heme b</name>
        <dbReference type="ChEBI" id="CHEBI:60344"/>
    </cofactor>
    <text evidence="1">With its partner (PsbE) binds heme. PSII binds additional chlorophylls, carotenoids and specific lipids.</text>
</comment>
<comment type="subunit">
    <text evidence="1">Heterodimer of an alpha subunit and a beta subunit. PSII is composed of 1 copy each of membrane proteins PsbA, PsbB, PsbC, PsbD, PsbE, PsbF, PsbH, PsbI, PsbJ, PsbK, PsbL, PsbM, PsbT, PsbX, PsbY, PsbZ, Psb30/Ycf12, at least 3 peripheral proteins of the oxygen-evolving complex and a large number of cofactors. It forms dimeric complexes.</text>
</comment>
<comment type="subcellular location">
    <subcellularLocation>
        <location evidence="1">Plastid</location>
        <location evidence="1">Chloroplast thylakoid membrane</location>
        <topology evidence="1">Single-pass membrane protein</topology>
    </subcellularLocation>
</comment>
<comment type="similarity">
    <text evidence="1">Belongs to the PsbE/PsbF family.</text>
</comment>
<protein>
    <recommendedName>
        <fullName evidence="1">Cytochrome b559 subunit beta</fullName>
    </recommendedName>
    <alternativeName>
        <fullName evidence="1">PSII reaction center subunit VI</fullName>
    </alternativeName>
</protein>
<gene>
    <name evidence="1" type="primary">psbF</name>
</gene>
<accession>Q9BBR6</accession>
<evidence type="ECO:0000255" key="1">
    <source>
        <dbReference type="HAMAP-Rule" id="MF_00643"/>
    </source>
</evidence>
<feature type="chain" id="PRO_0000200414" description="Cytochrome b559 subunit beta">
    <location>
        <begin position="1"/>
        <end position="39"/>
    </location>
</feature>
<feature type="transmembrane region" description="Helical" evidence="1">
    <location>
        <begin position="14"/>
        <end position="30"/>
    </location>
</feature>
<feature type="binding site" description="axial binding residue" evidence="1">
    <location>
        <position position="18"/>
    </location>
    <ligand>
        <name>heme</name>
        <dbReference type="ChEBI" id="CHEBI:30413"/>
        <note>ligand shared with alpha subunit</note>
    </ligand>
    <ligandPart>
        <name>Fe</name>
        <dbReference type="ChEBI" id="CHEBI:18248"/>
    </ligandPart>
</feature>
<organism>
    <name type="scientific">Lotus japonicus</name>
    <name type="common">Lotus corniculatus var. japonicus</name>
    <dbReference type="NCBI Taxonomy" id="34305"/>
    <lineage>
        <taxon>Eukaryota</taxon>
        <taxon>Viridiplantae</taxon>
        <taxon>Streptophyta</taxon>
        <taxon>Embryophyta</taxon>
        <taxon>Tracheophyta</taxon>
        <taxon>Spermatophyta</taxon>
        <taxon>Magnoliopsida</taxon>
        <taxon>eudicotyledons</taxon>
        <taxon>Gunneridae</taxon>
        <taxon>Pentapetalae</taxon>
        <taxon>rosids</taxon>
        <taxon>fabids</taxon>
        <taxon>Fabales</taxon>
        <taxon>Fabaceae</taxon>
        <taxon>Papilionoideae</taxon>
        <taxon>50 kb inversion clade</taxon>
        <taxon>NPAAA clade</taxon>
        <taxon>Hologalegina</taxon>
        <taxon>robinioid clade</taxon>
        <taxon>Loteae</taxon>
        <taxon>Lotus</taxon>
    </lineage>
</organism>
<name>PSBF_LOTJA</name>
<proteinExistence type="inferred from homology"/>
<reference key="1">
    <citation type="journal article" date="2000" name="DNA Res.">
        <title>Complete structure of the chloroplast genome of a legume, Lotus japonicus.</title>
        <authorList>
            <person name="Kato T."/>
            <person name="Kaneko T."/>
            <person name="Sato S."/>
            <person name="Nakamura Y."/>
            <person name="Tabata S."/>
        </authorList>
    </citation>
    <scope>NUCLEOTIDE SEQUENCE [LARGE SCALE GENOMIC DNA]</scope>
    <source>
        <strain>cv. Miyakojima MG-20</strain>
    </source>
</reference>
<dbReference type="EMBL" id="AP002983">
    <property type="protein sequence ID" value="BAB33212.1"/>
    <property type="molecule type" value="Genomic_DNA"/>
</dbReference>
<dbReference type="RefSeq" id="NP_084814.1">
    <property type="nucleotide sequence ID" value="NC_002694.1"/>
</dbReference>
<dbReference type="SMR" id="Q9BBR6"/>
<dbReference type="GeneID" id="802893"/>
<dbReference type="GO" id="GO:0009535">
    <property type="term" value="C:chloroplast thylakoid membrane"/>
    <property type="evidence" value="ECO:0007669"/>
    <property type="project" value="UniProtKB-SubCell"/>
</dbReference>
<dbReference type="GO" id="GO:0009539">
    <property type="term" value="C:photosystem II reaction center"/>
    <property type="evidence" value="ECO:0007669"/>
    <property type="project" value="InterPro"/>
</dbReference>
<dbReference type="GO" id="GO:0009055">
    <property type="term" value="F:electron transfer activity"/>
    <property type="evidence" value="ECO:0007669"/>
    <property type="project" value="UniProtKB-UniRule"/>
</dbReference>
<dbReference type="GO" id="GO:0020037">
    <property type="term" value="F:heme binding"/>
    <property type="evidence" value="ECO:0007669"/>
    <property type="project" value="InterPro"/>
</dbReference>
<dbReference type="GO" id="GO:0005506">
    <property type="term" value="F:iron ion binding"/>
    <property type="evidence" value="ECO:0007669"/>
    <property type="project" value="UniProtKB-UniRule"/>
</dbReference>
<dbReference type="GO" id="GO:0009767">
    <property type="term" value="P:photosynthetic electron transport chain"/>
    <property type="evidence" value="ECO:0007669"/>
    <property type="project" value="InterPro"/>
</dbReference>
<dbReference type="HAMAP" id="MF_00643">
    <property type="entry name" value="PSII_PsbF"/>
    <property type="match status" value="1"/>
</dbReference>
<dbReference type="InterPro" id="IPR006241">
    <property type="entry name" value="PSII_cyt_b559_bsu"/>
</dbReference>
<dbReference type="InterPro" id="IPR006216">
    <property type="entry name" value="PSII_cyt_b559_CS"/>
</dbReference>
<dbReference type="InterPro" id="IPR013081">
    <property type="entry name" value="PSII_cyt_b559_N"/>
</dbReference>
<dbReference type="NCBIfam" id="TIGR01333">
    <property type="entry name" value="cyt_b559_beta"/>
    <property type="match status" value="1"/>
</dbReference>
<dbReference type="Pfam" id="PF00283">
    <property type="entry name" value="Cytochrom_B559"/>
    <property type="match status" value="1"/>
</dbReference>
<dbReference type="PIRSF" id="PIRSF000037">
    <property type="entry name" value="PsbF"/>
    <property type="match status" value="1"/>
</dbReference>
<dbReference type="SUPFAM" id="SSF161045">
    <property type="entry name" value="Cytochrome b559 subunits"/>
    <property type="match status" value="1"/>
</dbReference>
<dbReference type="PROSITE" id="PS00537">
    <property type="entry name" value="CYTOCHROME_B559"/>
    <property type="match status" value="1"/>
</dbReference>
<sequence>MTIDRTFPIFTVRWLAVHGLAVPTVSFLGSISAMQFIQR</sequence>
<keyword id="KW-0150">Chloroplast</keyword>
<keyword id="KW-0249">Electron transport</keyword>
<keyword id="KW-0349">Heme</keyword>
<keyword id="KW-0408">Iron</keyword>
<keyword id="KW-0472">Membrane</keyword>
<keyword id="KW-0479">Metal-binding</keyword>
<keyword id="KW-0602">Photosynthesis</keyword>
<keyword id="KW-0604">Photosystem II</keyword>
<keyword id="KW-0934">Plastid</keyword>
<keyword id="KW-0793">Thylakoid</keyword>
<keyword id="KW-0812">Transmembrane</keyword>
<keyword id="KW-1133">Transmembrane helix</keyword>
<keyword id="KW-0813">Transport</keyword>
<geneLocation type="chloroplast"/>